<organism>
    <name type="scientific">Cereibacter sphaeroides (strain ATCC 17025 / ATH 2.4.3)</name>
    <name type="common">Rhodobacter sphaeroides</name>
    <dbReference type="NCBI Taxonomy" id="349102"/>
    <lineage>
        <taxon>Bacteria</taxon>
        <taxon>Pseudomonadati</taxon>
        <taxon>Pseudomonadota</taxon>
        <taxon>Alphaproteobacteria</taxon>
        <taxon>Rhodobacterales</taxon>
        <taxon>Paracoccaceae</taxon>
        <taxon>Cereibacter</taxon>
    </lineage>
</organism>
<protein>
    <recommendedName>
        <fullName evidence="1">Succinyl-diaminopimelate desuccinylase</fullName>
        <shortName evidence="1">SDAP desuccinylase</shortName>
        <ecNumber evidence="1">3.5.1.18</ecNumber>
    </recommendedName>
    <alternativeName>
        <fullName evidence="1">N-succinyl-LL-2,6-diaminoheptanedioate amidohydrolase</fullName>
    </alternativeName>
</protein>
<reference key="1">
    <citation type="submission" date="2007-04" db="EMBL/GenBank/DDBJ databases">
        <title>Complete sequence of chromosome of Rhodobacter sphaeroides ATCC 17025.</title>
        <authorList>
            <consortium name="US DOE Joint Genome Institute"/>
            <person name="Copeland A."/>
            <person name="Lucas S."/>
            <person name="Lapidus A."/>
            <person name="Barry K."/>
            <person name="Detter J.C."/>
            <person name="Glavina del Rio T."/>
            <person name="Hammon N."/>
            <person name="Israni S."/>
            <person name="Dalin E."/>
            <person name="Tice H."/>
            <person name="Pitluck S."/>
            <person name="Chertkov O."/>
            <person name="Brettin T."/>
            <person name="Bruce D."/>
            <person name="Han C."/>
            <person name="Schmutz J."/>
            <person name="Larimer F."/>
            <person name="Land M."/>
            <person name="Hauser L."/>
            <person name="Kyrpides N."/>
            <person name="Kim E."/>
            <person name="Richardson P."/>
            <person name="Mackenzie C."/>
            <person name="Choudhary M."/>
            <person name="Donohue T.J."/>
            <person name="Kaplan S."/>
        </authorList>
    </citation>
    <scope>NUCLEOTIDE SEQUENCE [LARGE SCALE GENOMIC DNA]</scope>
    <source>
        <strain>ATCC 17025 / ATH 2.4.3</strain>
    </source>
</reference>
<dbReference type="EC" id="3.5.1.18" evidence="1"/>
<dbReference type="EMBL" id="CP000661">
    <property type="protein sequence ID" value="ABP68960.1"/>
    <property type="molecule type" value="Genomic_DNA"/>
</dbReference>
<dbReference type="SMR" id="A4WNJ6"/>
<dbReference type="STRING" id="349102.Rsph17025_0048"/>
<dbReference type="KEGG" id="rsq:Rsph17025_0048"/>
<dbReference type="eggNOG" id="COG0624">
    <property type="taxonomic scope" value="Bacteria"/>
</dbReference>
<dbReference type="HOGENOM" id="CLU_021802_4_0_5"/>
<dbReference type="BioCyc" id="RSPH349102:G1G8M-48-MONOMER"/>
<dbReference type="UniPathway" id="UPA00034">
    <property type="reaction ID" value="UER00021"/>
</dbReference>
<dbReference type="GO" id="GO:0008777">
    <property type="term" value="F:acetylornithine deacetylase activity"/>
    <property type="evidence" value="ECO:0007669"/>
    <property type="project" value="TreeGrafter"/>
</dbReference>
<dbReference type="GO" id="GO:0050897">
    <property type="term" value="F:cobalt ion binding"/>
    <property type="evidence" value="ECO:0007669"/>
    <property type="project" value="UniProtKB-UniRule"/>
</dbReference>
<dbReference type="GO" id="GO:0009014">
    <property type="term" value="F:succinyl-diaminopimelate desuccinylase activity"/>
    <property type="evidence" value="ECO:0007669"/>
    <property type="project" value="UniProtKB-UniRule"/>
</dbReference>
<dbReference type="GO" id="GO:0008270">
    <property type="term" value="F:zinc ion binding"/>
    <property type="evidence" value="ECO:0007669"/>
    <property type="project" value="UniProtKB-UniRule"/>
</dbReference>
<dbReference type="GO" id="GO:0019877">
    <property type="term" value="P:diaminopimelate biosynthetic process"/>
    <property type="evidence" value="ECO:0007669"/>
    <property type="project" value="UniProtKB-UniRule"/>
</dbReference>
<dbReference type="GO" id="GO:0006526">
    <property type="term" value="P:L-arginine biosynthetic process"/>
    <property type="evidence" value="ECO:0007669"/>
    <property type="project" value="TreeGrafter"/>
</dbReference>
<dbReference type="GO" id="GO:0009089">
    <property type="term" value="P:lysine biosynthetic process via diaminopimelate"/>
    <property type="evidence" value="ECO:0007669"/>
    <property type="project" value="UniProtKB-UniRule"/>
</dbReference>
<dbReference type="CDD" id="cd03891">
    <property type="entry name" value="M20_DapE_proteobac"/>
    <property type="match status" value="1"/>
</dbReference>
<dbReference type="Gene3D" id="3.30.70.360">
    <property type="match status" value="1"/>
</dbReference>
<dbReference type="Gene3D" id="3.40.630.10">
    <property type="entry name" value="Zn peptidases"/>
    <property type="match status" value="1"/>
</dbReference>
<dbReference type="HAMAP" id="MF_01690">
    <property type="entry name" value="DapE"/>
    <property type="match status" value="1"/>
</dbReference>
<dbReference type="InterPro" id="IPR001261">
    <property type="entry name" value="ArgE/DapE_CS"/>
</dbReference>
<dbReference type="InterPro" id="IPR036264">
    <property type="entry name" value="Bact_exopeptidase_dim_dom"/>
</dbReference>
<dbReference type="InterPro" id="IPR005941">
    <property type="entry name" value="DapE_proteobac"/>
</dbReference>
<dbReference type="InterPro" id="IPR002933">
    <property type="entry name" value="Peptidase_M20"/>
</dbReference>
<dbReference type="InterPro" id="IPR011650">
    <property type="entry name" value="Peptidase_M20_dimer"/>
</dbReference>
<dbReference type="InterPro" id="IPR050072">
    <property type="entry name" value="Peptidase_M20A"/>
</dbReference>
<dbReference type="NCBIfam" id="TIGR01246">
    <property type="entry name" value="dapE_proteo"/>
    <property type="match status" value="1"/>
</dbReference>
<dbReference type="NCBIfam" id="NF009557">
    <property type="entry name" value="PRK13009.1"/>
    <property type="match status" value="1"/>
</dbReference>
<dbReference type="PANTHER" id="PTHR43808">
    <property type="entry name" value="ACETYLORNITHINE DEACETYLASE"/>
    <property type="match status" value="1"/>
</dbReference>
<dbReference type="PANTHER" id="PTHR43808:SF31">
    <property type="entry name" value="N-ACETYL-L-CITRULLINE DEACETYLASE"/>
    <property type="match status" value="1"/>
</dbReference>
<dbReference type="Pfam" id="PF07687">
    <property type="entry name" value="M20_dimer"/>
    <property type="match status" value="1"/>
</dbReference>
<dbReference type="Pfam" id="PF01546">
    <property type="entry name" value="Peptidase_M20"/>
    <property type="match status" value="1"/>
</dbReference>
<dbReference type="SUPFAM" id="SSF55031">
    <property type="entry name" value="Bacterial exopeptidase dimerisation domain"/>
    <property type="match status" value="1"/>
</dbReference>
<dbReference type="SUPFAM" id="SSF53187">
    <property type="entry name" value="Zn-dependent exopeptidases"/>
    <property type="match status" value="1"/>
</dbReference>
<dbReference type="PROSITE" id="PS00759">
    <property type="entry name" value="ARGE_DAPE_CPG2_2"/>
    <property type="match status" value="1"/>
</dbReference>
<evidence type="ECO:0000255" key="1">
    <source>
        <dbReference type="HAMAP-Rule" id="MF_01690"/>
    </source>
</evidence>
<sequence length="380" mass="40641">MPLDPVALTADLVRCPSVTPEEGGALVLLERILTEAGFDCRRVDRNGVPNLFARWGRKGANRTFGFNGHTDVVPVGDAAAWTRDPFGGEIADGWLWGRGATDMKSGVAAFVAAAVDFVQETPPDGAVILTITGDEEGDSVDGTTALLDWMATEGEAMTVCLVGEPTCPERLGEMMKIGRRGSMTAFFTARGVQGHSAYPHRAKNPVSAMARLIDRLASHELDKGTGHFDPSTLAVTTIDTGNPATNVIPALCRATVNIRFNDRHSGASLIRWLEQEAAEVAAETGVEIGLSAKISGESFLTPPGELSELVARAVEAETGLRPEPSTSGGTSDARFVRAHCPVVEFGLVGKTMHQVDERVEVAQIEPLKAIYKRILKDYFT</sequence>
<accession>A4WNJ6</accession>
<keyword id="KW-0028">Amino-acid biosynthesis</keyword>
<keyword id="KW-0170">Cobalt</keyword>
<keyword id="KW-0220">Diaminopimelate biosynthesis</keyword>
<keyword id="KW-0378">Hydrolase</keyword>
<keyword id="KW-0457">Lysine biosynthesis</keyword>
<keyword id="KW-0479">Metal-binding</keyword>
<keyword id="KW-0862">Zinc</keyword>
<feature type="chain" id="PRO_0000375685" description="Succinyl-diaminopimelate desuccinylase">
    <location>
        <begin position="1"/>
        <end position="380"/>
    </location>
</feature>
<feature type="active site" evidence="1">
    <location>
        <position position="71"/>
    </location>
</feature>
<feature type="active site" description="Proton acceptor" evidence="1">
    <location>
        <position position="135"/>
    </location>
</feature>
<feature type="binding site" evidence="1">
    <location>
        <position position="69"/>
    </location>
    <ligand>
        <name>Zn(2+)</name>
        <dbReference type="ChEBI" id="CHEBI:29105"/>
        <label>1</label>
    </ligand>
</feature>
<feature type="binding site" evidence="1">
    <location>
        <position position="102"/>
    </location>
    <ligand>
        <name>Zn(2+)</name>
        <dbReference type="ChEBI" id="CHEBI:29105"/>
        <label>1</label>
    </ligand>
</feature>
<feature type="binding site" evidence="1">
    <location>
        <position position="102"/>
    </location>
    <ligand>
        <name>Zn(2+)</name>
        <dbReference type="ChEBI" id="CHEBI:29105"/>
        <label>2</label>
    </ligand>
</feature>
<feature type="binding site" evidence="1">
    <location>
        <position position="136"/>
    </location>
    <ligand>
        <name>Zn(2+)</name>
        <dbReference type="ChEBI" id="CHEBI:29105"/>
        <label>2</label>
    </ligand>
</feature>
<feature type="binding site" evidence="1">
    <location>
        <position position="164"/>
    </location>
    <ligand>
        <name>Zn(2+)</name>
        <dbReference type="ChEBI" id="CHEBI:29105"/>
        <label>1</label>
    </ligand>
</feature>
<feature type="binding site" evidence="1">
    <location>
        <position position="353"/>
    </location>
    <ligand>
        <name>Zn(2+)</name>
        <dbReference type="ChEBI" id="CHEBI:29105"/>
        <label>2</label>
    </ligand>
</feature>
<comment type="function">
    <text evidence="1">Catalyzes the hydrolysis of N-succinyl-L,L-diaminopimelic acid (SDAP), forming succinate and LL-2,6-diaminopimelate (DAP), an intermediate involved in the bacterial biosynthesis of lysine and meso-diaminopimelic acid, an essential component of bacterial cell walls.</text>
</comment>
<comment type="catalytic activity">
    <reaction evidence="1">
        <text>N-succinyl-(2S,6S)-2,6-diaminopimelate + H2O = (2S,6S)-2,6-diaminopimelate + succinate</text>
        <dbReference type="Rhea" id="RHEA:22608"/>
        <dbReference type="ChEBI" id="CHEBI:15377"/>
        <dbReference type="ChEBI" id="CHEBI:30031"/>
        <dbReference type="ChEBI" id="CHEBI:57609"/>
        <dbReference type="ChEBI" id="CHEBI:58087"/>
        <dbReference type="EC" id="3.5.1.18"/>
    </reaction>
</comment>
<comment type="cofactor">
    <cofactor evidence="1">
        <name>Zn(2+)</name>
        <dbReference type="ChEBI" id="CHEBI:29105"/>
    </cofactor>
    <cofactor evidence="1">
        <name>Co(2+)</name>
        <dbReference type="ChEBI" id="CHEBI:48828"/>
    </cofactor>
    <text evidence="1">Binds 2 Zn(2+) or Co(2+) ions per subunit.</text>
</comment>
<comment type="pathway">
    <text evidence="1">Amino-acid biosynthesis; L-lysine biosynthesis via DAP pathway; LL-2,6-diaminopimelate from (S)-tetrahydrodipicolinate (succinylase route): step 3/3.</text>
</comment>
<comment type="subunit">
    <text evidence="1">Homodimer.</text>
</comment>
<comment type="similarity">
    <text evidence="1">Belongs to the peptidase M20A family. DapE subfamily.</text>
</comment>
<gene>
    <name evidence="1" type="primary">dapE</name>
    <name type="ordered locus">Rsph17025_0048</name>
</gene>
<proteinExistence type="inferred from homology"/>
<name>DAPE_CERS5</name>